<protein>
    <recommendedName>
        <fullName>RRP15-like protein</fullName>
    </recommendedName>
    <alternativeName>
        <fullName>Ribosomal RNA-processing protein 15</fullName>
    </alternativeName>
</protein>
<feature type="initiator methionine" description="Removed" evidence="6 7 8">
    <location>
        <position position="1"/>
    </location>
</feature>
<feature type="chain" id="PRO_0000273213" description="RRP15-like protein">
    <location>
        <begin position="2"/>
        <end position="282"/>
    </location>
</feature>
<feature type="region of interest" description="Disordered" evidence="3">
    <location>
        <begin position="1"/>
        <end position="125"/>
    </location>
</feature>
<feature type="region of interest" description="Disordered" evidence="3">
    <location>
        <begin position="218"/>
        <end position="282"/>
    </location>
</feature>
<feature type="coiled-coil region" evidence="2">
    <location>
        <begin position="108"/>
        <end position="144"/>
    </location>
</feature>
<feature type="compositionally biased region" description="Acidic residues" evidence="3">
    <location>
        <begin position="35"/>
        <end position="44"/>
    </location>
</feature>
<feature type="compositionally biased region" description="Acidic residues" evidence="3">
    <location>
        <begin position="59"/>
        <end position="72"/>
    </location>
</feature>
<feature type="compositionally biased region" description="Basic and acidic residues" evidence="3">
    <location>
        <begin position="116"/>
        <end position="125"/>
    </location>
</feature>
<feature type="compositionally biased region" description="Basic and acidic residues" evidence="3">
    <location>
        <begin position="260"/>
        <end position="276"/>
    </location>
</feature>
<feature type="modified residue" description="N-acetylalanine" evidence="6 7 8">
    <location>
        <position position="2"/>
    </location>
</feature>
<feature type="modified residue" description="Citrulline" evidence="1">
    <location>
        <position position="9"/>
    </location>
</feature>
<feature type="modified residue" description="Phosphoserine" evidence="7 8 9">
    <location>
        <position position="11"/>
    </location>
</feature>
<feature type="modified residue" description="Phosphothreonine" evidence="9">
    <location>
        <position position="19"/>
    </location>
</feature>
<feature type="modified residue" description="Phosphoserine" evidence="8">
    <location>
        <position position="58"/>
    </location>
</feature>
<feature type="modified residue" description="Phosphoserine" evidence="8">
    <location>
        <position position="67"/>
    </location>
</feature>
<feature type="modified residue" description="Phosphothreonine" evidence="5 7 9">
    <location>
        <position position="104"/>
    </location>
</feature>
<feature type="modified residue" description="Phosphoserine" evidence="9">
    <location>
        <position position="206"/>
    </location>
</feature>
<feature type="modified residue" description="Phosphoserine" evidence="5 8">
    <location>
        <position position="266"/>
    </location>
</feature>
<feature type="modified residue" description="Phosphoserine" evidence="5">
    <location>
        <position position="276"/>
    </location>
</feature>
<feature type="modified residue" description="Phosphoserine" evidence="5">
    <location>
        <position position="280"/>
    </location>
</feature>
<feature type="cross-link" description="Glycyl lysine isopeptide (Lys-Gly) (interchain with G-Cter in SUMO2)" evidence="12">
    <location>
        <position position="108"/>
    </location>
</feature>
<feature type="cross-link" description="Glycyl lysine isopeptide (Lys-Gly) (interchain with G-Cter in SUMO2)" evidence="12">
    <location>
        <position position="179"/>
    </location>
</feature>
<feature type="cross-link" description="Glycyl lysine isopeptide (Lys-Gly) (interchain with G-Cter in SUMO2)" evidence="12">
    <location>
        <position position="208"/>
    </location>
</feature>
<feature type="cross-link" description="Glycyl lysine isopeptide (Lys-Gly) (interchain with G-Cter in SUMO1); alternate" evidence="10">
    <location>
        <position position="239"/>
    </location>
</feature>
<feature type="cross-link" description="Glycyl lysine isopeptide (Lys-Gly) (interchain with G-Cter in SUMO2); alternate" evidence="10 11 12">
    <location>
        <position position="239"/>
    </location>
</feature>
<feature type="sequence variant" id="VAR_053813" description="In dbSNP:rs34358288.">
    <original>A</original>
    <variation>V</variation>
    <location>
        <position position="32"/>
    </location>
</feature>
<feature type="sequence variant" id="VAR_030112" description="In dbSNP:rs11118075.">
    <original>K</original>
    <variation>N</variation>
    <location>
        <position position="149"/>
    </location>
</feature>
<feature type="sequence variant" id="VAR_030113" description="In dbSNP:rs3737978.">
    <original>K</original>
    <variation>R</variation>
    <location>
        <position position="230"/>
    </location>
</feature>
<feature type="sequence conflict" description="In Ref. 2; AAD34110." evidence="4" ref="2">
    <original>K</original>
    <variation>N</variation>
    <location>
        <position position="23"/>
    </location>
</feature>
<accession>Q9Y3B9</accession>
<reference key="1">
    <citation type="journal article" date="2004" name="Genome Res.">
        <title>The status, quality, and expansion of the NIH full-length cDNA project: the Mammalian Gene Collection (MGC).</title>
        <authorList>
            <consortium name="The MGC Project Team"/>
        </authorList>
    </citation>
    <scope>NUCLEOTIDE SEQUENCE [LARGE SCALE MRNA]</scope>
    <source>
        <tissue>Testis</tissue>
    </source>
</reference>
<reference key="2">
    <citation type="journal article" date="2000" name="Genome Res.">
        <title>Identification of novel human genes evolutionarily conserved in Caenorhabditis elegans by comparative proteomics.</title>
        <authorList>
            <person name="Lai C.-H."/>
            <person name="Chou C.-Y."/>
            <person name="Ch'ang L.-Y."/>
            <person name="Liu C.-S."/>
            <person name="Lin W.-C."/>
        </authorList>
    </citation>
    <scope>NUCLEOTIDE SEQUENCE [LARGE SCALE MRNA] OF 13-282</scope>
</reference>
<reference key="3">
    <citation type="journal article" date="2006" name="Cell">
        <title>Global, in vivo, and site-specific phosphorylation dynamics in signaling networks.</title>
        <authorList>
            <person name="Olsen J.V."/>
            <person name="Blagoev B."/>
            <person name="Gnad F."/>
            <person name="Macek B."/>
            <person name="Kumar C."/>
            <person name="Mortensen P."/>
            <person name="Mann M."/>
        </authorList>
    </citation>
    <scope>IDENTIFICATION BY MASS SPECTROMETRY [LARGE SCALE ANALYSIS]</scope>
    <source>
        <tissue>Cervix carcinoma</tissue>
    </source>
</reference>
<reference key="4">
    <citation type="journal article" date="2008" name="Proc. Natl. Acad. Sci. U.S.A.">
        <title>A quantitative atlas of mitotic phosphorylation.</title>
        <authorList>
            <person name="Dephoure N."/>
            <person name="Zhou C."/>
            <person name="Villen J."/>
            <person name="Beausoleil S.A."/>
            <person name="Bakalarski C.E."/>
            <person name="Elledge S.J."/>
            <person name="Gygi S.P."/>
        </authorList>
    </citation>
    <scope>PHOSPHORYLATION [LARGE SCALE ANALYSIS] AT THR-104; SER-266; SER-276 AND SER-280</scope>
    <scope>IDENTIFICATION BY MASS SPECTROMETRY [LARGE SCALE ANALYSIS]</scope>
    <source>
        <tissue>Cervix carcinoma</tissue>
    </source>
</reference>
<reference key="5">
    <citation type="journal article" date="2009" name="Anal. Chem.">
        <title>Lys-N and trypsin cover complementary parts of the phosphoproteome in a refined SCX-based approach.</title>
        <authorList>
            <person name="Gauci S."/>
            <person name="Helbig A.O."/>
            <person name="Slijper M."/>
            <person name="Krijgsveld J."/>
            <person name="Heck A.J."/>
            <person name="Mohammed S."/>
        </authorList>
    </citation>
    <scope>ACETYLATION [LARGE SCALE ANALYSIS] AT ALA-2</scope>
    <scope>CLEAVAGE OF INITIATOR METHIONINE [LARGE SCALE ANALYSIS]</scope>
    <scope>IDENTIFICATION BY MASS SPECTROMETRY [LARGE SCALE ANALYSIS]</scope>
</reference>
<reference key="6">
    <citation type="journal article" date="2010" name="Sci. Signal.">
        <title>Quantitative phosphoproteomics reveals widespread full phosphorylation site occupancy during mitosis.</title>
        <authorList>
            <person name="Olsen J.V."/>
            <person name="Vermeulen M."/>
            <person name="Santamaria A."/>
            <person name="Kumar C."/>
            <person name="Miller M.L."/>
            <person name="Jensen L.J."/>
            <person name="Gnad F."/>
            <person name="Cox J."/>
            <person name="Jensen T.S."/>
            <person name="Nigg E.A."/>
            <person name="Brunak S."/>
            <person name="Mann M."/>
        </authorList>
    </citation>
    <scope>ACETYLATION [LARGE SCALE ANALYSIS] AT ALA-2</scope>
    <scope>PHOSPHORYLATION [LARGE SCALE ANALYSIS] AT SER-11 AND THR-104</scope>
    <scope>CLEAVAGE OF INITIATOR METHIONINE [LARGE SCALE ANALYSIS]</scope>
    <scope>IDENTIFICATION BY MASS SPECTROMETRY [LARGE SCALE ANALYSIS]</scope>
    <source>
        <tissue>Cervix carcinoma</tissue>
    </source>
</reference>
<reference key="7">
    <citation type="journal article" date="2011" name="BMC Syst. Biol.">
        <title>Initial characterization of the human central proteome.</title>
        <authorList>
            <person name="Burkard T.R."/>
            <person name="Planyavsky M."/>
            <person name="Kaupe I."/>
            <person name="Breitwieser F.P."/>
            <person name="Buerckstuemmer T."/>
            <person name="Bennett K.L."/>
            <person name="Superti-Furga G."/>
            <person name="Colinge J."/>
        </authorList>
    </citation>
    <scope>IDENTIFICATION BY MASS SPECTROMETRY [LARGE SCALE ANALYSIS]</scope>
</reference>
<reference key="8">
    <citation type="journal article" date="2011" name="Sci. Signal.">
        <title>System-wide temporal characterization of the proteome and phosphoproteome of human embryonic stem cell differentiation.</title>
        <authorList>
            <person name="Rigbolt K.T."/>
            <person name="Prokhorova T.A."/>
            <person name="Akimov V."/>
            <person name="Henningsen J."/>
            <person name="Johansen P.T."/>
            <person name="Kratchmarova I."/>
            <person name="Kassem M."/>
            <person name="Mann M."/>
            <person name="Olsen J.V."/>
            <person name="Blagoev B."/>
        </authorList>
    </citation>
    <scope>ACETYLATION [LARGE SCALE ANALYSIS] AT ALA-2</scope>
    <scope>PHOSPHORYLATION [LARGE SCALE ANALYSIS] AT SER-11; SER-58; SER-67 AND SER-266</scope>
    <scope>CLEAVAGE OF INITIATOR METHIONINE [LARGE SCALE ANALYSIS]</scope>
    <scope>IDENTIFICATION BY MASS SPECTROMETRY [LARGE SCALE ANALYSIS]</scope>
</reference>
<reference key="9">
    <citation type="journal article" date="2013" name="J. Proteome Res.">
        <title>Toward a comprehensive characterization of a human cancer cell phosphoproteome.</title>
        <authorList>
            <person name="Zhou H."/>
            <person name="Di Palma S."/>
            <person name="Preisinger C."/>
            <person name="Peng M."/>
            <person name="Polat A.N."/>
            <person name="Heck A.J."/>
            <person name="Mohammed S."/>
        </authorList>
    </citation>
    <scope>PHOSPHORYLATION [LARGE SCALE ANALYSIS] AT SER-11; THR-19; THR-104 AND SER-206</scope>
    <scope>IDENTIFICATION BY MASS SPECTROMETRY [LARGE SCALE ANALYSIS]</scope>
    <source>
        <tissue>Cervix carcinoma</tissue>
        <tissue>Erythroleukemia</tissue>
    </source>
</reference>
<reference key="10">
    <citation type="journal article" date="2014" name="Nat. Struct. Mol. Biol.">
        <title>Uncovering global SUMOylation signaling networks in a site-specific manner.</title>
        <authorList>
            <person name="Hendriks I.A."/>
            <person name="D'Souza R.C."/>
            <person name="Yang B."/>
            <person name="Verlaan-de Vries M."/>
            <person name="Mann M."/>
            <person name="Vertegaal A.C."/>
        </authorList>
    </citation>
    <scope>SUMOYLATION [LARGE SCALE ANALYSIS] AT LYS-239</scope>
    <scope>IDENTIFICATION BY MASS SPECTROMETRY [LARGE SCALE ANALYSIS]</scope>
</reference>
<reference key="11">
    <citation type="journal article" date="2014" name="Proc. Natl. Acad. Sci. U.S.A.">
        <title>Mapping of SUMO sites and analysis of SUMOylation changes induced by external stimuli.</title>
        <authorList>
            <person name="Impens F."/>
            <person name="Radoshevich L."/>
            <person name="Cossart P."/>
            <person name="Ribet D."/>
        </authorList>
    </citation>
    <scope>SUMOYLATION [LARGE SCALE ANALYSIS] AT LYS-239</scope>
    <scope>IDENTIFICATION BY MASS SPECTROMETRY [LARGE SCALE ANALYSIS]</scope>
</reference>
<reference key="12">
    <citation type="journal article" date="2017" name="Nat. Struct. Mol. Biol.">
        <title>Site-specific mapping of the human SUMO proteome reveals co-modification with phosphorylation.</title>
        <authorList>
            <person name="Hendriks I.A."/>
            <person name="Lyon D."/>
            <person name="Young C."/>
            <person name="Jensen L.J."/>
            <person name="Vertegaal A.C."/>
            <person name="Nielsen M.L."/>
        </authorList>
    </citation>
    <scope>SUMOYLATION [LARGE SCALE ANALYSIS] AT LYS-108; LYS-179; LYS-208 AND LYS-239</scope>
    <scope>IDENTIFICATION BY MASS SPECTROMETRY [LARGE SCALE ANALYSIS]</scope>
</reference>
<evidence type="ECO:0000250" key="1"/>
<evidence type="ECO:0000255" key="2"/>
<evidence type="ECO:0000256" key="3">
    <source>
        <dbReference type="SAM" id="MobiDB-lite"/>
    </source>
</evidence>
<evidence type="ECO:0000305" key="4"/>
<evidence type="ECO:0007744" key="5">
    <source>
    </source>
</evidence>
<evidence type="ECO:0007744" key="6">
    <source>
    </source>
</evidence>
<evidence type="ECO:0007744" key="7">
    <source>
    </source>
</evidence>
<evidence type="ECO:0007744" key="8">
    <source>
    </source>
</evidence>
<evidence type="ECO:0007744" key="9">
    <source>
    </source>
</evidence>
<evidence type="ECO:0007744" key="10">
    <source>
    </source>
</evidence>
<evidence type="ECO:0007744" key="11">
    <source>
    </source>
</evidence>
<evidence type="ECO:0007744" key="12">
    <source>
    </source>
</evidence>
<name>RRP15_HUMAN</name>
<keyword id="KW-0002">3D-structure</keyword>
<keyword id="KW-0007">Acetylation</keyword>
<keyword id="KW-0164">Citrullination</keyword>
<keyword id="KW-0175">Coiled coil</keyword>
<keyword id="KW-1017">Isopeptide bond</keyword>
<keyword id="KW-0597">Phosphoprotein</keyword>
<keyword id="KW-1267">Proteomics identification</keyword>
<keyword id="KW-1185">Reference proteome</keyword>
<keyword id="KW-0832">Ubl conjugation</keyword>
<proteinExistence type="evidence at protein level"/>
<gene>
    <name type="primary">RRP15</name>
    <name type="synonym">KIAA0507</name>
    <name type="ORF">CGI-115</name>
</gene>
<comment type="PTM">
    <text evidence="1">Citrullinated by PADI4.</text>
</comment>
<comment type="similarity">
    <text evidence="4">Belongs to the RRP15 family.</text>
</comment>
<comment type="sequence caution" evidence="4">
    <conflict type="erroneous initiation">
        <sequence resource="EMBL-CDS" id="AAD34110"/>
    </conflict>
</comment>
<comment type="sequence caution" evidence="4">
    <conflict type="erroneous initiation">
        <sequence resource="EMBL-CDS" id="AAH20641"/>
    </conflict>
</comment>
<organism>
    <name type="scientific">Homo sapiens</name>
    <name type="common">Human</name>
    <dbReference type="NCBI Taxonomy" id="9606"/>
    <lineage>
        <taxon>Eukaryota</taxon>
        <taxon>Metazoa</taxon>
        <taxon>Chordata</taxon>
        <taxon>Craniata</taxon>
        <taxon>Vertebrata</taxon>
        <taxon>Euteleostomi</taxon>
        <taxon>Mammalia</taxon>
        <taxon>Eutheria</taxon>
        <taxon>Euarchontoglires</taxon>
        <taxon>Primates</taxon>
        <taxon>Haplorrhini</taxon>
        <taxon>Catarrhini</taxon>
        <taxon>Hominidae</taxon>
        <taxon>Homo</taxon>
    </lineage>
</organism>
<dbReference type="EMBL" id="BC020641">
    <property type="protein sequence ID" value="AAH20641.1"/>
    <property type="status" value="ALT_INIT"/>
    <property type="molecule type" value="mRNA"/>
</dbReference>
<dbReference type="EMBL" id="AF151873">
    <property type="protein sequence ID" value="AAD34110.1"/>
    <property type="status" value="ALT_INIT"/>
    <property type="molecule type" value="mRNA"/>
</dbReference>
<dbReference type="CCDS" id="CCDS1520.2"/>
<dbReference type="RefSeq" id="NP_057136.2">
    <property type="nucleotide sequence ID" value="NM_016052.4"/>
</dbReference>
<dbReference type="PDB" id="8FKP">
    <property type="method" value="EM"/>
    <property type="resolution" value="2.85 A"/>
    <property type="chains" value="NG=1-282"/>
</dbReference>
<dbReference type="PDB" id="8FKQ">
    <property type="method" value="EM"/>
    <property type="resolution" value="2.76 A"/>
    <property type="chains" value="NG=1-282"/>
</dbReference>
<dbReference type="PDB" id="8FKR">
    <property type="method" value="EM"/>
    <property type="resolution" value="2.89 A"/>
    <property type="chains" value="NG=1-282"/>
</dbReference>
<dbReference type="PDB" id="8FKS">
    <property type="method" value="EM"/>
    <property type="resolution" value="2.88 A"/>
    <property type="chains" value="NG=1-282"/>
</dbReference>
<dbReference type="PDBsum" id="8FKP"/>
<dbReference type="PDBsum" id="8FKQ"/>
<dbReference type="PDBsum" id="8FKR"/>
<dbReference type="PDBsum" id="8FKS"/>
<dbReference type="EMDB" id="EMD-29252"/>
<dbReference type="EMDB" id="EMD-29253"/>
<dbReference type="EMDB" id="EMD-29254"/>
<dbReference type="EMDB" id="EMD-29255"/>
<dbReference type="SMR" id="Q9Y3B9"/>
<dbReference type="BioGRID" id="119224">
    <property type="interactions" value="158"/>
</dbReference>
<dbReference type="FunCoup" id="Q9Y3B9">
    <property type="interactions" value="708"/>
</dbReference>
<dbReference type="IntAct" id="Q9Y3B9">
    <property type="interactions" value="70"/>
</dbReference>
<dbReference type="MINT" id="Q9Y3B9"/>
<dbReference type="STRING" id="9606.ENSP00000355899"/>
<dbReference type="GlyGen" id="Q9Y3B9">
    <property type="glycosylation" value="1 site, 1 O-linked glycan (1 site)"/>
</dbReference>
<dbReference type="iPTMnet" id="Q9Y3B9"/>
<dbReference type="PhosphoSitePlus" id="Q9Y3B9"/>
<dbReference type="SwissPalm" id="Q9Y3B9"/>
<dbReference type="BioMuta" id="RRP15"/>
<dbReference type="DMDM" id="124053370"/>
<dbReference type="jPOST" id="Q9Y3B9"/>
<dbReference type="MassIVE" id="Q9Y3B9"/>
<dbReference type="PaxDb" id="9606-ENSP00000355899"/>
<dbReference type="PeptideAtlas" id="Q9Y3B9"/>
<dbReference type="ProteomicsDB" id="86008"/>
<dbReference type="Pumba" id="Q9Y3B9"/>
<dbReference type="Antibodypedia" id="20731">
    <property type="antibodies" value="72 antibodies from 15 providers"/>
</dbReference>
<dbReference type="DNASU" id="51018"/>
<dbReference type="Ensembl" id="ENST00000366932.4">
    <property type="protein sequence ID" value="ENSP00000355899.3"/>
    <property type="gene ID" value="ENSG00000067533.6"/>
</dbReference>
<dbReference type="GeneID" id="51018"/>
<dbReference type="KEGG" id="hsa:51018"/>
<dbReference type="MANE-Select" id="ENST00000366932.4">
    <property type="protein sequence ID" value="ENSP00000355899.3"/>
    <property type="RefSeq nucleotide sequence ID" value="NM_016052.4"/>
    <property type="RefSeq protein sequence ID" value="NP_057136.2"/>
</dbReference>
<dbReference type="UCSC" id="uc001hlj.3">
    <property type="organism name" value="human"/>
</dbReference>
<dbReference type="AGR" id="HGNC:24255"/>
<dbReference type="CTD" id="51018"/>
<dbReference type="DisGeNET" id="51018"/>
<dbReference type="GeneCards" id="RRP15"/>
<dbReference type="HGNC" id="HGNC:24255">
    <property type="gene designation" value="RRP15"/>
</dbReference>
<dbReference type="HPA" id="ENSG00000067533">
    <property type="expression patterns" value="Low tissue specificity"/>
</dbReference>
<dbReference type="MIM" id="611193">
    <property type="type" value="gene"/>
</dbReference>
<dbReference type="neXtProt" id="NX_Q9Y3B9"/>
<dbReference type="OpenTargets" id="ENSG00000067533"/>
<dbReference type="PharmGKB" id="PA162402123"/>
<dbReference type="VEuPathDB" id="HostDB:ENSG00000067533"/>
<dbReference type="eggNOG" id="KOG2974">
    <property type="taxonomic scope" value="Eukaryota"/>
</dbReference>
<dbReference type="GeneTree" id="ENSGT00390000001960"/>
<dbReference type="HOGENOM" id="CLU_079732_0_0_1"/>
<dbReference type="InParanoid" id="Q9Y3B9"/>
<dbReference type="OMA" id="FVKQRFY"/>
<dbReference type="OrthoDB" id="20949at2759"/>
<dbReference type="PAN-GO" id="Q9Y3B9">
    <property type="GO annotations" value="3 GO annotations based on evolutionary models"/>
</dbReference>
<dbReference type="PhylomeDB" id="Q9Y3B9"/>
<dbReference type="TreeFam" id="TF106119"/>
<dbReference type="PathwayCommons" id="Q9Y3B9"/>
<dbReference type="SignaLink" id="Q9Y3B9"/>
<dbReference type="BioGRID-ORCS" id="51018">
    <property type="hits" value="696 hits in 1163 CRISPR screens"/>
</dbReference>
<dbReference type="CD-CODE" id="91857CE7">
    <property type="entry name" value="Nucleolus"/>
</dbReference>
<dbReference type="CD-CODE" id="DEE660B4">
    <property type="entry name" value="Stress granule"/>
</dbReference>
<dbReference type="ChiTaRS" id="RRP15">
    <property type="organism name" value="human"/>
</dbReference>
<dbReference type="GeneWiki" id="RRP15"/>
<dbReference type="GenomeRNAi" id="51018"/>
<dbReference type="Pharos" id="Q9Y3B9">
    <property type="development level" value="Tdark"/>
</dbReference>
<dbReference type="PRO" id="PR:Q9Y3B9"/>
<dbReference type="Proteomes" id="UP000005640">
    <property type="component" value="Chromosome 1"/>
</dbReference>
<dbReference type="RNAct" id="Q9Y3B9">
    <property type="molecule type" value="protein"/>
</dbReference>
<dbReference type="Bgee" id="ENSG00000067533">
    <property type="expression patterns" value="Expressed in secondary oocyte and 196 other cell types or tissues"/>
</dbReference>
<dbReference type="GO" id="GO:0030687">
    <property type="term" value="C:preribosome, large subunit precursor"/>
    <property type="evidence" value="ECO:0000318"/>
    <property type="project" value="GO_Central"/>
</dbReference>
<dbReference type="GO" id="GO:0000460">
    <property type="term" value="P:maturation of 5.8S rRNA"/>
    <property type="evidence" value="ECO:0000318"/>
    <property type="project" value="GO_Central"/>
</dbReference>
<dbReference type="GO" id="GO:0000470">
    <property type="term" value="P:maturation of LSU-rRNA"/>
    <property type="evidence" value="ECO:0000318"/>
    <property type="project" value="GO_Central"/>
</dbReference>
<dbReference type="InterPro" id="IPR012459">
    <property type="entry name" value="Rrp15"/>
</dbReference>
<dbReference type="PANTHER" id="PTHR13245">
    <property type="entry name" value="RRP15-LIKE PROTEIN"/>
    <property type="match status" value="1"/>
</dbReference>
<dbReference type="PANTHER" id="PTHR13245:SF14">
    <property type="entry name" value="RRP15-LIKE PROTEIN"/>
    <property type="match status" value="1"/>
</dbReference>
<dbReference type="Pfam" id="PF07890">
    <property type="entry name" value="Rrp15p"/>
    <property type="match status" value="1"/>
</dbReference>
<sequence>MAAAAPDSRVSEEENLKKTPKKKMKMVTGAVASVLEDEATDTSDSEGSCGSEKDHFYSDDDAIEADSEGDAEPCDKENENDGESSVGTNMGWADAMAKVLNKKTPESKPTILVKNKKLEKEKEKLKQERLEKIKQRDKRLEWEMMCRVKPDVVQDKETERNLQRIATRGVVQLFNAVQKHQKNVDEKVKEAGSSMRKRAKLISTVSKKDFISVLRGMDGSTNETASSRKKPKAKQTEVKSEEGPGWTILRDDFMMGASMKDWDKESDGPDDSRPESASDSDT</sequence>